<accession>P62798</accession>
<accession>P02304</accession>
<accession>P02305</accession>
<name>H4_XENBO</name>
<reference key="1">
    <citation type="journal article" date="1982" name="Nucleic Acids Res.">
        <title>H3 and H4 histone cDNA sequences from Xenopus: a sequence comparison of H4 genes.</title>
        <authorList>
            <person name="Turner P.C."/>
            <person name="Woodland H.R."/>
        </authorList>
    </citation>
    <scope>NUCLEOTIDE SEQUENCE [MRNA]</scope>
</reference>
<organism>
    <name type="scientific">Xenopus borealis</name>
    <name type="common">Kenyan clawed frog</name>
    <dbReference type="NCBI Taxonomy" id="8354"/>
    <lineage>
        <taxon>Eukaryota</taxon>
        <taxon>Metazoa</taxon>
        <taxon>Chordata</taxon>
        <taxon>Craniata</taxon>
        <taxon>Vertebrata</taxon>
        <taxon>Euteleostomi</taxon>
        <taxon>Amphibia</taxon>
        <taxon>Batrachia</taxon>
        <taxon>Anura</taxon>
        <taxon>Pipoidea</taxon>
        <taxon>Pipidae</taxon>
        <taxon>Xenopodinae</taxon>
        <taxon>Xenopus</taxon>
        <taxon>Xenopus</taxon>
    </lineage>
</organism>
<proteinExistence type="evidence at protein level"/>
<comment type="function">
    <text>Core component of nucleosome. Nucleosomes wrap and compact DNA into chromatin, limiting DNA accessibility to the cellular machineries which require DNA as a template. Histones thereby play a central role in transcription regulation, DNA repair, DNA replication and chromosomal stability. DNA accessibility is regulated via a complex set of post-translational modifications of histones, also called histone code, and nucleosome remodeling.</text>
</comment>
<comment type="subunit">
    <text>The nucleosome is a histone octamer containing two molecules each of H2A, H2B, H3 and H4 assembled in one H3-H4 heterotetramer and two H2A-H2B heterodimers. The octamer wraps approximately 147 bp of DNA.</text>
</comment>
<comment type="subcellular location">
    <subcellularLocation>
        <location evidence="1">Nucleus</location>
    </subcellularLocation>
    <subcellularLocation>
        <location evidence="1">Chromosome</location>
    </subcellularLocation>
</comment>
<comment type="PTM">
    <text evidence="2">Acetylation at Lys-6 (H4K5ac), Lys-9 (H4K8ac), Lys-13 (H4K12ac) and Lys-17 (H4K16ac) occurs in coding regions of the genome but not in heterochromatin.</text>
</comment>
<comment type="PTM">
    <text evidence="2">Citrullination at Arg-4 (H4R3ci) by PADI4 impairs methylation.</text>
</comment>
<comment type="PTM">
    <text evidence="2">Monomethylation and asymmetric dimethylation at Arg-4 (H4R3me1 and H4R3me2a, respectively) by PRMT1 favors acetylation at Lys-9 (H4K8ac) and Lys-13 (H4K12ac). Demethylation is performed by JMJD6. Symmetric dimethylation on Arg-4 (H4R3me2s) by the PRDM1/PRMT5 complex may play a crucial role in the germ-cell lineage (By similarity).</text>
</comment>
<comment type="PTM">
    <text evidence="2">Monomethylated, dimethylated or trimethylated at Lys-21 (H4K20me1, H4K20me2, H4K20me3). Monomethylation is performed by KMT5A/SET8. Trimethylation is performed by KMT5B and KMT5C and induces gene silencing. Monomethylated at Lys-13 (H4K12me1) by N6AMT1; H4K12me1 modification is present at the promoters of numerous genes encoding cell cycle regulators.</text>
</comment>
<comment type="PTM">
    <text evidence="2">Acetyl-methylated at Lys-6 and Lys-13 (H4K5acme and H4K12acme, respectively), acetyl-methylation is an epigenetic mark of active chromatin associated with increased transcriptional initiation. Acetyl-methylation is formed by acetylation by EP300/p300 of lysine residues that are already monomethylated on the same side chain. H4K5acme and H4K12acme marks specifically bind BRD2.</text>
</comment>
<comment type="PTM">
    <text evidence="2">Phosphorylated by pak2 at Ser-48 (H4S47ph). This phosphorylation increases the association of H3.3-H4 with the histone chaperone HIRA, thus promoting nucleosome assembly of H3.3-H4 and inhibiting nucleosome assembly of H3.1-H4 (By similarity).</text>
</comment>
<comment type="PTM">
    <text evidence="2">Ubiquitinated by the CUL4-DDB-RBX1 complex in response to ultraviolet irradiation. This may weaken the interaction between histones and DNA and facilitate DNA accessibility to repair proteins. Monoubiquitinated at Lys-92 of histone H4 (H4K91ub1) in response to DNA damage. The exact role of H4K91ub1 in DNA damage response is still unclear but it may function as a licensing signal for additional histone H4 post-translational modifications such as H4 Lys-21 methylation (H4K20me) (By similarity).</text>
</comment>
<comment type="PTM">
    <text evidence="2">Sumoylated, which is associated with transcriptional repression.</text>
</comment>
<comment type="PTM">
    <text evidence="3">Butyrylation of histones marks active promoters and competes with histone acetylation.</text>
</comment>
<comment type="PTM">
    <text evidence="2">Glutarylation at Lys-92 (H4K91glu) destabilizes nucleosomes by promoting dissociation of the H2A-H2B dimers from nucleosomes.</text>
</comment>
<comment type="PTM">
    <text evidence="2">Ufmylated; monofmylated by UFL1 at Lys-32 (H4K31Ufm1) in response to DNA damage.</text>
</comment>
<comment type="PTM">
    <text evidence="2">Lactylated in macrophages by EP300/P300 by using lactoyl-CoA directly derived from endogenous or exogenous lactate, leading to stimulates gene transcription. Delactylated by SIRT3 at Lys-17 (H4K16la).</text>
</comment>
<comment type="similarity">
    <text evidence="5">Belongs to the histone H4 family.</text>
</comment>
<sequence length="103" mass="11367">MSGRGKGGKGLGKGGAKRHRKVLRDNIQGITKPAIRRLARRGGVKRISGLIYEETRGVLKVFLENVIRDAVTYTEHAKRKTVTAMDVVYALKRQGRTLYGFGG</sequence>
<dbReference type="EMBL" id="J00985">
    <property type="protein sequence ID" value="AAA72138.1"/>
    <property type="molecule type" value="mRNA"/>
</dbReference>
<dbReference type="PIR" id="I51433">
    <property type="entry name" value="I51433"/>
</dbReference>
<dbReference type="PDB" id="8EUJ">
    <property type="method" value="EM"/>
    <property type="resolution" value="3.36 A"/>
    <property type="chains" value="B/F=1-103"/>
</dbReference>
<dbReference type="PDBsum" id="8EUJ"/>
<dbReference type="EMDB" id="EMD-28612"/>
<dbReference type="EMDB" id="EMD-28614"/>
<dbReference type="SMR" id="P62798"/>
<dbReference type="GO" id="GO:0000786">
    <property type="term" value="C:nucleosome"/>
    <property type="evidence" value="ECO:0007669"/>
    <property type="project" value="UniProtKB-KW"/>
</dbReference>
<dbReference type="GO" id="GO:0005634">
    <property type="term" value="C:nucleus"/>
    <property type="evidence" value="ECO:0007669"/>
    <property type="project" value="UniProtKB-SubCell"/>
</dbReference>
<dbReference type="GO" id="GO:0003677">
    <property type="term" value="F:DNA binding"/>
    <property type="evidence" value="ECO:0007669"/>
    <property type="project" value="UniProtKB-KW"/>
</dbReference>
<dbReference type="GO" id="GO:0046982">
    <property type="term" value="F:protein heterodimerization activity"/>
    <property type="evidence" value="ECO:0007669"/>
    <property type="project" value="InterPro"/>
</dbReference>
<dbReference type="GO" id="GO:0030527">
    <property type="term" value="F:structural constituent of chromatin"/>
    <property type="evidence" value="ECO:0007669"/>
    <property type="project" value="InterPro"/>
</dbReference>
<dbReference type="CDD" id="cd22912">
    <property type="entry name" value="HFD_H4"/>
    <property type="match status" value="1"/>
</dbReference>
<dbReference type="FunFam" id="1.10.20.10:FF:000002">
    <property type="entry name" value="Histone H4"/>
    <property type="match status" value="1"/>
</dbReference>
<dbReference type="Gene3D" id="1.10.20.10">
    <property type="entry name" value="Histone, subunit A"/>
    <property type="match status" value="1"/>
</dbReference>
<dbReference type="InterPro" id="IPR035425">
    <property type="entry name" value="CENP-T/H4_C"/>
</dbReference>
<dbReference type="InterPro" id="IPR009072">
    <property type="entry name" value="Histone-fold"/>
</dbReference>
<dbReference type="InterPro" id="IPR001951">
    <property type="entry name" value="Histone_H4"/>
</dbReference>
<dbReference type="InterPro" id="IPR019809">
    <property type="entry name" value="Histone_H4_CS"/>
</dbReference>
<dbReference type="InterPro" id="IPR004823">
    <property type="entry name" value="TAF_TATA-bd_Histone-like_dom"/>
</dbReference>
<dbReference type="PANTHER" id="PTHR10484">
    <property type="entry name" value="HISTONE H4"/>
    <property type="match status" value="1"/>
</dbReference>
<dbReference type="Pfam" id="PF15511">
    <property type="entry name" value="CENP-T_C"/>
    <property type="match status" value="1"/>
</dbReference>
<dbReference type="PRINTS" id="PR00623">
    <property type="entry name" value="HISTONEH4"/>
</dbReference>
<dbReference type="SMART" id="SM00417">
    <property type="entry name" value="H4"/>
    <property type="match status" value="1"/>
</dbReference>
<dbReference type="SMART" id="SM00803">
    <property type="entry name" value="TAF"/>
    <property type="match status" value="1"/>
</dbReference>
<dbReference type="SUPFAM" id="SSF47113">
    <property type="entry name" value="Histone-fold"/>
    <property type="match status" value="1"/>
</dbReference>
<dbReference type="PROSITE" id="PS00047">
    <property type="entry name" value="HISTONE_H4"/>
    <property type="match status" value="1"/>
</dbReference>
<evidence type="ECO:0000250" key="1"/>
<evidence type="ECO:0000250" key="2">
    <source>
        <dbReference type="UniProtKB" id="P62805"/>
    </source>
</evidence>
<evidence type="ECO:0000250" key="3">
    <source>
        <dbReference type="UniProtKB" id="P62806"/>
    </source>
</evidence>
<evidence type="ECO:0000256" key="4">
    <source>
        <dbReference type="SAM" id="MobiDB-lite"/>
    </source>
</evidence>
<evidence type="ECO:0000305" key="5"/>
<evidence type="ECO:0007829" key="6">
    <source>
        <dbReference type="PDB" id="8EUJ"/>
    </source>
</evidence>
<keyword id="KW-0002">3D-structure</keyword>
<keyword id="KW-0007">Acetylation</keyword>
<keyword id="KW-0158">Chromosome</keyword>
<keyword id="KW-0164">Citrullination</keyword>
<keyword id="KW-0238">DNA-binding</keyword>
<keyword id="KW-0379">Hydroxylation</keyword>
<keyword id="KW-1017">Isopeptide bond</keyword>
<keyword id="KW-0488">Methylation</keyword>
<keyword id="KW-0544">Nucleosome core</keyword>
<keyword id="KW-0539">Nucleus</keyword>
<keyword id="KW-0597">Phosphoprotein</keyword>
<keyword id="KW-0832">Ubl conjugation</keyword>
<feature type="initiator methionine" description="Removed" evidence="1">
    <location>
        <position position="1"/>
    </location>
</feature>
<feature type="chain" id="PRO_0000158375" description="Histone H4">
    <location>
        <begin position="2"/>
        <end position="103"/>
    </location>
</feature>
<feature type="DNA-binding region">
    <location>
        <begin position="17"/>
        <end position="21"/>
    </location>
</feature>
<feature type="region of interest" description="Disordered" evidence="4">
    <location>
        <begin position="1"/>
        <end position="20"/>
    </location>
</feature>
<feature type="compositionally biased region" description="Gly residues" evidence="4">
    <location>
        <begin position="1"/>
        <end position="14"/>
    </location>
</feature>
<feature type="modified residue" description="N-acetylserine" evidence="2">
    <location>
        <position position="2"/>
    </location>
</feature>
<feature type="modified residue" description="Phosphoserine" evidence="2">
    <location>
        <position position="2"/>
    </location>
</feature>
<feature type="modified residue" description="Asymmetric dimethylarginine; by PRMT1; alternate" evidence="2">
    <location>
        <position position="4"/>
    </location>
</feature>
<feature type="modified residue" description="Citrulline; alternate" evidence="2">
    <location>
        <position position="4"/>
    </location>
</feature>
<feature type="modified residue" description="Omega-N-methylarginine; by PRMT1; alternate" evidence="2">
    <location>
        <position position="4"/>
    </location>
</feature>
<feature type="modified residue" description="Symmetric dimethylarginine; by PRMT5 and PRMT7; alternate" evidence="2">
    <location>
        <position position="4"/>
    </location>
</feature>
<feature type="modified residue" description="N6-(2-hydroxyisobutyryl)lysine; alternate" evidence="2">
    <location>
        <position position="6"/>
    </location>
</feature>
<feature type="modified residue" description="N6-acetyl-N6-methyllysine; alternate" evidence="2">
    <location>
        <position position="6"/>
    </location>
</feature>
<feature type="modified residue" description="N6-acetyllysine" evidence="2">
    <location>
        <position position="6"/>
    </location>
</feature>
<feature type="modified residue" description="N6-butyryllysine; alternate" evidence="2">
    <location>
        <position position="6"/>
    </location>
</feature>
<feature type="modified residue" description="N6-glutaryllysine; alternate" evidence="2">
    <location>
        <position position="6"/>
    </location>
</feature>
<feature type="modified residue" description="N6-lactoyllysine; alternate" evidence="2">
    <location>
        <position position="6"/>
    </location>
</feature>
<feature type="modified residue" description="N6-(2-hydroxyisobutyryl)lysine; alternate" evidence="2">
    <location>
        <position position="9"/>
    </location>
</feature>
<feature type="modified residue" description="N6-acetyllysine" evidence="2">
    <location>
        <position position="9"/>
    </location>
</feature>
<feature type="modified residue" description="N6-butyryllysine; alternate" evidence="2">
    <location>
        <position position="9"/>
    </location>
</feature>
<feature type="modified residue" description="N6-lactoyllysine; alternate" evidence="2">
    <location>
        <position position="9"/>
    </location>
</feature>
<feature type="modified residue" description="N6-propionyllysine; alternate" evidence="2">
    <location>
        <position position="9"/>
    </location>
</feature>
<feature type="modified residue" description="N6-(2-hydroxyisobutyryl)lysine; alternate" evidence="2">
    <location>
        <position position="13"/>
    </location>
</feature>
<feature type="modified residue" description="N6-acetyl-N6-methyllysine; alternate" evidence="2">
    <location>
        <position position="13"/>
    </location>
</feature>
<feature type="modified residue" description="N6-acetyllysine" evidence="2">
    <location>
        <position position="13"/>
    </location>
</feature>
<feature type="modified residue" description="N6-butyryllysine; alternate" evidence="2">
    <location>
        <position position="13"/>
    </location>
</feature>
<feature type="modified residue" description="N6-glutaryllysine; alternate" evidence="2">
    <location>
        <position position="13"/>
    </location>
</feature>
<feature type="modified residue" description="N6-lactoyllysine; alternate" evidence="2">
    <location>
        <position position="13"/>
    </location>
</feature>
<feature type="modified residue" description="N6-methyllysine; alternate" evidence="2">
    <location>
        <position position="13"/>
    </location>
</feature>
<feature type="modified residue" description="N6-(2-hydroxyisobutyryl)lysine; alternate" evidence="2">
    <location>
        <position position="17"/>
    </location>
</feature>
<feature type="modified residue" description="N6-acetyllysine" evidence="2">
    <location>
        <position position="17"/>
    </location>
</feature>
<feature type="modified residue" description="N6-butyryllysine; alternate" evidence="2">
    <location>
        <position position="17"/>
    </location>
</feature>
<feature type="modified residue" description="N6-lactoyllysine; alternate" evidence="2">
    <location>
        <position position="17"/>
    </location>
</feature>
<feature type="modified residue" description="N6-propionyllysine; alternate" evidence="2">
    <location>
        <position position="17"/>
    </location>
</feature>
<feature type="modified residue" description="N6,N6,N6-trimethyllysine; alternate" evidence="2">
    <location>
        <position position="21"/>
    </location>
</feature>
<feature type="modified residue" description="N6,N6-dimethyllysine; alternate" evidence="2">
    <location>
        <position position="21"/>
    </location>
</feature>
<feature type="modified residue" description="N6-methyllysine; alternate" evidence="2">
    <location>
        <position position="21"/>
    </location>
</feature>
<feature type="modified residue" description="N6-(2-hydroxyisobutyryl)lysine; alternate" evidence="2">
    <location>
        <position position="32"/>
    </location>
</feature>
<feature type="modified residue" description="N6-acetyllysine" evidence="2">
    <location>
        <position position="32"/>
    </location>
</feature>
<feature type="modified residue" description="N6-butyryllysine; alternate" evidence="2">
    <location>
        <position position="32"/>
    </location>
</feature>
<feature type="modified residue" description="N6-glutaryllysine; alternate" evidence="2">
    <location>
        <position position="32"/>
    </location>
</feature>
<feature type="modified residue" description="N6-lactoyllysine; alternate" evidence="2">
    <location>
        <position position="32"/>
    </location>
</feature>
<feature type="modified residue" description="N6-propionyllysine; alternate" evidence="2">
    <location>
        <position position="32"/>
    </location>
</feature>
<feature type="modified residue" description="N6-succinyllysine; alternate" evidence="2">
    <location>
        <position position="32"/>
    </location>
</feature>
<feature type="modified residue" description="N6-(2-hydroxyisobutyryl)lysine; alternate" evidence="2">
    <location>
        <position position="45"/>
    </location>
</feature>
<feature type="modified residue" description="N6-butyryllysine; alternate" evidence="2">
    <location>
        <position position="45"/>
    </location>
</feature>
<feature type="modified residue" description="N6-propionyllysine; alternate" evidence="2">
    <location>
        <position position="45"/>
    </location>
</feature>
<feature type="modified residue" description="Phosphoserine; by PAK2" evidence="2">
    <location>
        <position position="48"/>
    </location>
</feature>
<feature type="modified residue" description="Phosphotyrosine" evidence="2">
    <location>
        <position position="52"/>
    </location>
</feature>
<feature type="modified residue" description="N6-(2-hydroxyisobutyryl)lysine" evidence="2">
    <location>
        <position position="60"/>
    </location>
</feature>
<feature type="modified residue" description="N6-acetyllysine" evidence="2">
    <location>
        <position position="60"/>
    </location>
</feature>
<feature type="modified residue" description="N6-glutaryllysine; alternate" evidence="2">
    <location>
        <position position="60"/>
    </location>
</feature>
<feature type="modified residue" description="N6-(2-hydroxyisobutyryl)lysine; alternate" evidence="2">
    <location>
        <position position="78"/>
    </location>
</feature>
<feature type="modified residue" description="N6-butyryllysine; alternate" evidence="2">
    <location>
        <position position="78"/>
    </location>
</feature>
<feature type="modified residue" description="N6-glutaryllysine; alternate" evidence="2">
    <location>
        <position position="78"/>
    </location>
</feature>
<feature type="modified residue" description="N6-lactoyllysine; alternate" evidence="2">
    <location>
        <position position="78"/>
    </location>
</feature>
<feature type="modified residue" description="N6-propionyllysine; alternate" evidence="2">
    <location>
        <position position="78"/>
    </location>
</feature>
<feature type="modified residue" description="N6-succinyllysine" evidence="2">
    <location>
        <position position="78"/>
    </location>
</feature>
<feature type="modified residue" description="N6-(2-hydroxyisobutyryl)lysine; alternate" evidence="2">
    <location>
        <position position="80"/>
    </location>
</feature>
<feature type="modified residue" description="N6-acetyllysine" evidence="2">
    <location>
        <position position="80"/>
    </location>
</feature>
<feature type="modified residue" description="N6-butyryllysine; alternate" evidence="2">
    <location>
        <position position="80"/>
    </location>
</feature>
<feature type="modified residue" description="N6-glutaryllysine; alternate" evidence="2">
    <location>
        <position position="80"/>
    </location>
</feature>
<feature type="modified residue" description="N6-propionyllysine; alternate" evidence="2">
    <location>
        <position position="80"/>
    </location>
</feature>
<feature type="modified residue" description="Phosphotyrosine" evidence="2">
    <location>
        <position position="89"/>
    </location>
</feature>
<feature type="modified residue" description="N6-(2-hydroxyisobutyryl)lysine; alternate" evidence="2">
    <location>
        <position position="92"/>
    </location>
</feature>
<feature type="modified residue" description="N6-acetyllysine; alternate" evidence="2">
    <location>
        <position position="92"/>
    </location>
</feature>
<feature type="modified residue" description="N6-butyryllysine; alternate" evidence="2">
    <location>
        <position position="92"/>
    </location>
</feature>
<feature type="modified residue" description="N6-glutaryllysine; alternate" evidence="2">
    <location>
        <position position="92"/>
    </location>
</feature>
<feature type="modified residue" description="N6-lactoyllysine; alternate" evidence="2">
    <location>
        <position position="92"/>
    </location>
</feature>
<feature type="modified residue" description="N6-propionyllysine; alternate" evidence="2">
    <location>
        <position position="92"/>
    </location>
</feature>
<feature type="modified residue" description="N6-succinyllysine; alternate" evidence="2">
    <location>
        <position position="92"/>
    </location>
</feature>
<feature type="cross-link" description="Glycyl lysine isopeptide (Lys-Gly) (interchain with G-Cter in UFM1); alternate" evidence="2">
    <location>
        <position position="32"/>
    </location>
</feature>
<feature type="cross-link" description="Glycyl lysine isopeptide (Lys-Gly) (interchain with G-Cter in ubiquitin); alternate" evidence="2">
    <location>
        <position position="92"/>
    </location>
</feature>
<feature type="helix" evidence="6">
    <location>
        <begin position="27"/>
        <end position="29"/>
    </location>
</feature>
<feature type="helix" evidence="6">
    <location>
        <begin position="32"/>
        <end position="41"/>
    </location>
</feature>
<feature type="helix" evidence="6">
    <location>
        <begin position="49"/>
        <end position="51"/>
    </location>
</feature>
<feature type="helix" evidence="6">
    <location>
        <begin position="52"/>
        <end position="76"/>
    </location>
</feature>
<feature type="strand" evidence="6">
    <location>
        <begin position="80"/>
        <end position="82"/>
    </location>
</feature>
<feature type="helix" evidence="6">
    <location>
        <begin position="84"/>
        <end position="93"/>
    </location>
</feature>
<feature type="strand" evidence="6">
    <location>
        <begin position="97"/>
        <end position="100"/>
    </location>
</feature>
<protein>
    <recommendedName>
        <fullName>Histone H4</fullName>
    </recommendedName>
</protein>